<dbReference type="EMBL" id="CU928158">
    <property type="protein sequence ID" value="CAQ87836.1"/>
    <property type="molecule type" value="Genomic_DNA"/>
</dbReference>
<dbReference type="RefSeq" id="WP_000343994.1">
    <property type="nucleotide sequence ID" value="NC_011740.1"/>
</dbReference>
<dbReference type="SMR" id="B7LVU6"/>
<dbReference type="GeneID" id="75058650"/>
<dbReference type="KEGG" id="efe:EFER_0267"/>
<dbReference type="HOGENOM" id="CLU_121866_0_0_6"/>
<dbReference type="OrthoDB" id="5599437at2"/>
<dbReference type="Proteomes" id="UP000000745">
    <property type="component" value="Chromosome"/>
</dbReference>
<dbReference type="GO" id="GO:0009898">
    <property type="term" value="C:cytoplasmic side of plasma membrane"/>
    <property type="evidence" value="ECO:0007669"/>
    <property type="project" value="InterPro"/>
</dbReference>
<dbReference type="CDD" id="cd16323">
    <property type="entry name" value="Syd"/>
    <property type="match status" value="1"/>
</dbReference>
<dbReference type="Gene3D" id="3.40.1580.20">
    <property type="entry name" value="Syd protein"/>
    <property type="match status" value="1"/>
</dbReference>
<dbReference type="HAMAP" id="MF_01104">
    <property type="entry name" value="Syd"/>
    <property type="match status" value="1"/>
</dbReference>
<dbReference type="InterPro" id="IPR009948">
    <property type="entry name" value="Syd"/>
</dbReference>
<dbReference type="InterPro" id="IPR038228">
    <property type="entry name" value="Syd_sf"/>
</dbReference>
<dbReference type="NCBIfam" id="NF003439">
    <property type="entry name" value="PRK04968.1"/>
    <property type="match status" value="1"/>
</dbReference>
<dbReference type="Pfam" id="PF07348">
    <property type="entry name" value="Syd"/>
    <property type="match status" value="1"/>
</dbReference>
<comment type="function">
    <text evidence="1">Interacts with the SecY protein in vivo. May bind preferentially to an uncomplexed state of SecY, thus functioning either as a chelating agent for excess SecY in the cell or as a regulatory factor that negatively controls the translocase function.</text>
</comment>
<comment type="subcellular location">
    <subcellularLocation>
        <location evidence="1">Cell inner membrane</location>
        <topology evidence="1">Peripheral membrane protein</topology>
        <orientation evidence="1">Cytoplasmic side</orientation>
    </subcellularLocation>
    <text evidence="1">Loosely associated with the cytoplasmic side of the inner membrane, probably via SecY.</text>
</comment>
<comment type="similarity">
    <text evidence="1">Belongs to the Syd family.</text>
</comment>
<keyword id="KW-0997">Cell inner membrane</keyword>
<keyword id="KW-1003">Cell membrane</keyword>
<keyword id="KW-0472">Membrane</keyword>
<sequence length="181" mass="20634">MDELTAQALRDFTTRYCDAWHEKHHSWPLSEELYGVPSPCIISTTSDAVYWQPQPFVGEQNLAAVERAFDIVLQPAIQTFYTTQFAGDMHAQFAEHTLTLLQTWSEDDFRRVQENLIGHLVTQKRLKLSPTLFIATLENELDVISLCNLSGEVCKETLGTRNRQVLAPSLAEFLKQLNPLL</sequence>
<accession>B7LVU6</accession>
<feature type="chain" id="PRO_1000137033" description="Protein Syd">
    <location>
        <begin position="1"/>
        <end position="181"/>
    </location>
</feature>
<name>SYDP_ESCF3</name>
<protein>
    <recommendedName>
        <fullName evidence="1">Protein Syd</fullName>
    </recommendedName>
</protein>
<evidence type="ECO:0000255" key="1">
    <source>
        <dbReference type="HAMAP-Rule" id="MF_01104"/>
    </source>
</evidence>
<proteinExistence type="inferred from homology"/>
<gene>
    <name evidence="1" type="primary">syd</name>
    <name type="ordered locus">EFER_0267</name>
</gene>
<organism>
    <name type="scientific">Escherichia fergusonii (strain ATCC 35469 / DSM 13698 / CCUG 18766 / IAM 14443 / JCM 21226 / LMG 7866 / NBRC 102419 / NCTC 12128 / CDC 0568-73)</name>
    <dbReference type="NCBI Taxonomy" id="585054"/>
    <lineage>
        <taxon>Bacteria</taxon>
        <taxon>Pseudomonadati</taxon>
        <taxon>Pseudomonadota</taxon>
        <taxon>Gammaproteobacteria</taxon>
        <taxon>Enterobacterales</taxon>
        <taxon>Enterobacteriaceae</taxon>
        <taxon>Escherichia</taxon>
    </lineage>
</organism>
<reference key="1">
    <citation type="journal article" date="2009" name="PLoS Genet.">
        <title>Organised genome dynamics in the Escherichia coli species results in highly diverse adaptive paths.</title>
        <authorList>
            <person name="Touchon M."/>
            <person name="Hoede C."/>
            <person name="Tenaillon O."/>
            <person name="Barbe V."/>
            <person name="Baeriswyl S."/>
            <person name="Bidet P."/>
            <person name="Bingen E."/>
            <person name="Bonacorsi S."/>
            <person name="Bouchier C."/>
            <person name="Bouvet O."/>
            <person name="Calteau A."/>
            <person name="Chiapello H."/>
            <person name="Clermont O."/>
            <person name="Cruveiller S."/>
            <person name="Danchin A."/>
            <person name="Diard M."/>
            <person name="Dossat C."/>
            <person name="Karoui M.E."/>
            <person name="Frapy E."/>
            <person name="Garry L."/>
            <person name="Ghigo J.M."/>
            <person name="Gilles A.M."/>
            <person name="Johnson J."/>
            <person name="Le Bouguenec C."/>
            <person name="Lescat M."/>
            <person name="Mangenot S."/>
            <person name="Martinez-Jehanne V."/>
            <person name="Matic I."/>
            <person name="Nassif X."/>
            <person name="Oztas S."/>
            <person name="Petit M.A."/>
            <person name="Pichon C."/>
            <person name="Rouy Z."/>
            <person name="Ruf C.S."/>
            <person name="Schneider D."/>
            <person name="Tourret J."/>
            <person name="Vacherie B."/>
            <person name="Vallenet D."/>
            <person name="Medigue C."/>
            <person name="Rocha E.P.C."/>
            <person name="Denamur E."/>
        </authorList>
    </citation>
    <scope>NUCLEOTIDE SEQUENCE [LARGE SCALE GENOMIC DNA]</scope>
    <source>
        <strain>ATCC 35469 / DSM 13698 / BCRC 15582 / CCUG 18766 / IAM 14443 / JCM 21226 / LMG 7866 / NBRC 102419 / NCTC 12128 / CDC 0568-73</strain>
    </source>
</reference>